<proteinExistence type="evidence at transcript level"/>
<accession>Q9VRN2</accession>
<accession>B5RIK3</accession>
<accession>Q8SWY8</accession>
<comment type="subcellular location">
    <subcellularLocation>
        <location evidence="3">Cell membrane</location>
        <topology evidence="3">Multi-pass membrane protein</topology>
    </subcellularLocation>
</comment>
<comment type="similarity">
    <text evidence="3">Belongs to the G-protein coupled receptor 2 family. Mth subfamily.</text>
</comment>
<sequence>MIASSKMLLSASILIYFLLNLQSSSAEIADCSFYDTVDISEGQRLSNGSYLYEGLLIPAHLTAKYEFKLLANGDKEQVPSHVRGCVCKLRTCVRFCCPHDHIMDMGECYANMTTEENELLDPMLNVTLDDGSVVQRHYKKELMVQWDLPKPCDDMFYLDNRDIMDEYTLFENGRLLRHYDQVYLDKSEYCLQHRTFGEGNNNSIRIIPHNCLILPSRTGQTVVMITSLICLVLTIAVYLCVKKLMNLEGKCFICYMMCLFFGYLFLLLDLWELSLDFCKAAGFLGYFFVMAAFFWLSIISRHYWKCLTNPCASMNIRSERAFLLYSCFAWAMPLALTGVTYLADNVVNNEEWQPRVGDEGHCWIYTKSWSAMVYFYGPMVLLILFNITMFVLTAKHIIDSKRTLRKIARNEGRIQKLNSDKQNYTQFLLLFTVMGMSWSFEIFSYLVQREKLWVNIFLVADYFNWSQGVIIFVLFILRRKTLVLFKKQIFPKQRAFSRSATQSTIESISQTKRHFNMT</sequence>
<keyword id="KW-1003">Cell membrane</keyword>
<keyword id="KW-1015">Disulfide bond</keyword>
<keyword id="KW-0297">G-protein coupled receptor</keyword>
<keyword id="KW-0325">Glycoprotein</keyword>
<keyword id="KW-0472">Membrane</keyword>
<keyword id="KW-0675">Receptor</keyword>
<keyword id="KW-1185">Reference proteome</keyword>
<keyword id="KW-0732">Signal</keyword>
<keyword id="KW-0807">Transducer</keyword>
<keyword id="KW-0812">Transmembrane</keyword>
<keyword id="KW-1133">Transmembrane helix</keyword>
<feature type="signal peptide" evidence="2">
    <location>
        <begin position="1"/>
        <end position="26"/>
    </location>
</feature>
<feature type="chain" id="PRO_0000013024" description="Probable G-protein coupled receptor Mth-like 2">
    <location>
        <begin position="27"/>
        <end position="518"/>
    </location>
</feature>
<feature type="topological domain" description="Extracellular" evidence="2">
    <location>
        <begin position="27"/>
        <end position="220"/>
    </location>
</feature>
<feature type="transmembrane region" description="Helical; Name=1" evidence="2">
    <location>
        <begin position="221"/>
        <end position="241"/>
    </location>
</feature>
<feature type="topological domain" description="Cytoplasmic" evidence="2">
    <location>
        <begin position="242"/>
        <end position="250"/>
    </location>
</feature>
<feature type="transmembrane region" description="Helical; Name=2" evidence="2">
    <location>
        <begin position="251"/>
        <end position="271"/>
    </location>
</feature>
<feature type="topological domain" description="Extracellular" evidence="2">
    <location>
        <begin position="272"/>
        <end position="279"/>
    </location>
</feature>
<feature type="transmembrane region" description="Helical; Name=3" evidence="2">
    <location>
        <begin position="280"/>
        <end position="300"/>
    </location>
</feature>
<feature type="topological domain" description="Cytoplasmic" evidence="2">
    <location>
        <begin position="301"/>
        <end position="321"/>
    </location>
</feature>
<feature type="transmembrane region" description="Helical; Name=4" evidence="2">
    <location>
        <begin position="322"/>
        <end position="342"/>
    </location>
</feature>
<feature type="topological domain" description="Extracellular" evidence="2">
    <location>
        <begin position="343"/>
        <end position="371"/>
    </location>
</feature>
<feature type="transmembrane region" description="Helical; Name=5" evidence="2">
    <location>
        <begin position="372"/>
        <end position="392"/>
    </location>
</feature>
<feature type="topological domain" description="Cytoplasmic" evidence="2">
    <location>
        <begin position="393"/>
        <end position="426"/>
    </location>
</feature>
<feature type="transmembrane region" description="Helical; Name=6" evidence="2">
    <location>
        <begin position="427"/>
        <end position="447"/>
    </location>
</feature>
<feature type="topological domain" description="Extracellular" evidence="2">
    <location>
        <begin position="448"/>
        <end position="455"/>
    </location>
</feature>
<feature type="transmembrane region" description="Helical; Name=7" evidence="2">
    <location>
        <begin position="456"/>
        <end position="476"/>
    </location>
</feature>
<feature type="topological domain" description="Cytoplasmic" evidence="2">
    <location>
        <begin position="477"/>
        <end position="518"/>
    </location>
</feature>
<feature type="glycosylation site" description="N-linked (GlcNAc...) asparagine" evidence="2">
    <location>
        <position position="47"/>
    </location>
</feature>
<feature type="glycosylation site" description="N-linked (GlcNAc...) asparagine" evidence="2">
    <location>
        <position position="111"/>
    </location>
</feature>
<feature type="glycosylation site" description="N-linked (GlcNAc...) asparagine" evidence="2">
    <location>
        <position position="125"/>
    </location>
</feature>
<feature type="glycosylation site" description="N-linked (GlcNAc...) asparagine" evidence="2">
    <location>
        <position position="201"/>
    </location>
</feature>
<feature type="disulfide bond" evidence="1">
    <location>
        <begin position="31"/>
        <end position="85"/>
    </location>
</feature>
<feature type="disulfide bond" evidence="1">
    <location>
        <begin position="87"/>
        <end position="92"/>
    </location>
</feature>
<feature type="disulfide bond" evidence="1">
    <location>
        <begin position="96"/>
        <end position="190"/>
    </location>
</feature>
<feature type="disulfide bond" evidence="1">
    <location>
        <begin position="97"/>
        <end position="108"/>
    </location>
</feature>
<feature type="disulfide bond" evidence="1">
    <location>
        <begin position="152"/>
        <end position="211"/>
    </location>
</feature>
<feature type="sequence conflict" description="In Ref. 3; AAM11297." evidence="3" ref="3">
    <original>C</original>
    <variation>G</variation>
    <location>
        <position position="85"/>
    </location>
</feature>
<gene>
    <name type="primary">mthl2</name>
    <name type="ORF">CG17795</name>
</gene>
<name>MTH2_DROME</name>
<protein>
    <recommendedName>
        <fullName>Probable G-protein coupled receptor Mth-like 2</fullName>
    </recommendedName>
    <alternativeName>
        <fullName>Protein methuselah-like 2</fullName>
    </alternativeName>
</protein>
<reference key="1">
    <citation type="journal article" date="2000" name="Science">
        <title>The genome sequence of Drosophila melanogaster.</title>
        <authorList>
            <person name="Adams M.D."/>
            <person name="Celniker S.E."/>
            <person name="Holt R.A."/>
            <person name="Evans C.A."/>
            <person name="Gocayne J.D."/>
            <person name="Amanatides P.G."/>
            <person name="Scherer S.E."/>
            <person name="Li P.W."/>
            <person name="Hoskins R.A."/>
            <person name="Galle R.F."/>
            <person name="George R.A."/>
            <person name="Lewis S.E."/>
            <person name="Richards S."/>
            <person name="Ashburner M."/>
            <person name="Henderson S.N."/>
            <person name="Sutton G.G."/>
            <person name="Wortman J.R."/>
            <person name="Yandell M.D."/>
            <person name="Zhang Q."/>
            <person name="Chen L.X."/>
            <person name="Brandon R.C."/>
            <person name="Rogers Y.-H.C."/>
            <person name="Blazej R.G."/>
            <person name="Champe M."/>
            <person name="Pfeiffer B.D."/>
            <person name="Wan K.H."/>
            <person name="Doyle C."/>
            <person name="Baxter E.G."/>
            <person name="Helt G."/>
            <person name="Nelson C.R."/>
            <person name="Miklos G.L.G."/>
            <person name="Abril J.F."/>
            <person name="Agbayani A."/>
            <person name="An H.-J."/>
            <person name="Andrews-Pfannkoch C."/>
            <person name="Baldwin D."/>
            <person name="Ballew R.M."/>
            <person name="Basu A."/>
            <person name="Baxendale J."/>
            <person name="Bayraktaroglu L."/>
            <person name="Beasley E.M."/>
            <person name="Beeson K.Y."/>
            <person name="Benos P.V."/>
            <person name="Berman B.P."/>
            <person name="Bhandari D."/>
            <person name="Bolshakov S."/>
            <person name="Borkova D."/>
            <person name="Botchan M.R."/>
            <person name="Bouck J."/>
            <person name="Brokstein P."/>
            <person name="Brottier P."/>
            <person name="Burtis K.C."/>
            <person name="Busam D.A."/>
            <person name="Butler H."/>
            <person name="Cadieu E."/>
            <person name="Center A."/>
            <person name="Chandra I."/>
            <person name="Cherry J.M."/>
            <person name="Cawley S."/>
            <person name="Dahlke C."/>
            <person name="Davenport L.B."/>
            <person name="Davies P."/>
            <person name="de Pablos B."/>
            <person name="Delcher A."/>
            <person name="Deng Z."/>
            <person name="Mays A.D."/>
            <person name="Dew I."/>
            <person name="Dietz S.M."/>
            <person name="Dodson K."/>
            <person name="Doup L.E."/>
            <person name="Downes M."/>
            <person name="Dugan-Rocha S."/>
            <person name="Dunkov B.C."/>
            <person name="Dunn P."/>
            <person name="Durbin K.J."/>
            <person name="Evangelista C.C."/>
            <person name="Ferraz C."/>
            <person name="Ferriera S."/>
            <person name="Fleischmann W."/>
            <person name="Fosler C."/>
            <person name="Gabrielian A.E."/>
            <person name="Garg N.S."/>
            <person name="Gelbart W.M."/>
            <person name="Glasser K."/>
            <person name="Glodek A."/>
            <person name="Gong F."/>
            <person name="Gorrell J.H."/>
            <person name="Gu Z."/>
            <person name="Guan P."/>
            <person name="Harris M."/>
            <person name="Harris N.L."/>
            <person name="Harvey D.A."/>
            <person name="Heiman T.J."/>
            <person name="Hernandez J.R."/>
            <person name="Houck J."/>
            <person name="Hostin D."/>
            <person name="Houston K.A."/>
            <person name="Howland T.J."/>
            <person name="Wei M.-H."/>
            <person name="Ibegwam C."/>
            <person name="Jalali M."/>
            <person name="Kalush F."/>
            <person name="Karpen G.H."/>
            <person name="Ke Z."/>
            <person name="Kennison J.A."/>
            <person name="Ketchum K.A."/>
            <person name="Kimmel B.E."/>
            <person name="Kodira C.D."/>
            <person name="Kraft C.L."/>
            <person name="Kravitz S."/>
            <person name="Kulp D."/>
            <person name="Lai Z."/>
            <person name="Lasko P."/>
            <person name="Lei Y."/>
            <person name="Levitsky A.A."/>
            <person name="Li J.H."/>
            <person name="Li Z."/>
            <person name="Liang Y."/>
            <person name="Lin X."/>
            <person name="Liu X."/>
            <person name="Mattei B."/>
            <person name="McIntosh T.C."/>
            <person name="McLeod M.P."/>
            <person name="McPherson D."/>
            <person name="Merkulov G."/>
            <person name="Milshina N.V."/>
            <person name="Mobarry C."/>
            <person name="Morris J."/>
            <person name="Moshrefi A."/>
            <person name="Mount S.M."/>
            <person name="Moy M."/>
            <person name="Murphy B."/>
            <person name="Murphy L."/>
            <person name="Muzny D.M."/>
            <person name="Nelson D.L."/>
            <person name="Nelson D.R."/>
            <person name="Nelson K.A."/>
            <person name="Nixon K."/>
            <person name="Nusskern D.R."/>
            <person name="Pacleb J.M."/>
            <person name="Palazzolo M."/>
            <person name="Pittman G.S."/>
            <person name="Pan S."/>
            <person name="Pollard J."/>
            <person name="Puri V."/>
            <person name="Reese M.G."/>
            <person name="Reinert K."/>
            <person name="Remington K."/>
            <person name="Saunders R.D.C."/>
            <person name="Scheeler F."/>
            <person name="Shen H."/>
            <person name="Shue B.C."/>
            <person name="Siden-Kiamos I."/>
            <person name="Simpson M."/>
            <person name="Skupski M.P."/>
            <person name="Smith T.J."/>
            <person name="Spier E."/>
            <person name="Spradling A.C."/>
            <person name="Stapleton M."/>
            <person name="Strong R."/>
            <person name="Sun E."/>
            <person name="Svirskas R."/>
            <person name="Tector C."/>
            <person name="Turner R."/>
            <person name="Venter E."/>
            <person name="Wang A.H."/>
            <person name="Wang X."/>
            <person name="Wang Z.-Y."/>
            <person name="Wassarman D.A."/>
            <person name="Weinstock G.M."/>
            <person name="Weissenbach J."/>
            <person name="Williams S.M."/>
            <person name="Woodage T."/>
            <person name="Worley K.C."/>
            <person name="Wu D."/>
            <person name="Yang S."/>
            <person name="Yao Q.A."/>
            <person name="Ye J."/>
            <person name="Yeh R.-F."/>
            <person name="Zaveri J.S."/>
            <person name="Zhan M."/>
            <person name="Zhang G."/>
            <person name="Zhao Q."/>
            <person name="Zheng L."/>
            <person name="Zheng X.H."/>
            <person name="Zhong F.N."/>
            <person name="Zhong W."/>
            <person name="Zhou X."/>
            <person name="Zhu S.C."/>
            <person name="Zhu X."/>
            <person name="Smith H.O."/>
            <person name="Gibbs R.A."/>
            <person name="Myers E.W."/>
            <person name="Rubin G.M."/>
            <person name="Venter J.C."/>
        </authorList>
    </citation>
    <scope>NUCLEOTIDE SEQUENCE [LARGE SCALE GENOMIC DNA]</scope>
    <source>
        <strain>Berkeley</strain>
    </source>
</reference>
<reference key="2">
    <citation type="journal article" date="2002" name="Genome Biol.">
        <title>Annotation of the Drosophila melanogaster euchromatic genome: a systematic review.</title>
        <authorList>
            <person name="Misra S."/>
            <person name="Crosby M.A."/>
            <person name="Mungall C.J."/>
            <person name="Matthews B.B."/>
            <person name="Campbell K.S."/>
            <person name="Hradecky P."/>
            <person name="Huang Y."/>
            <person name="Kaminker J.S."/>
            <person name="Millburn G.H."/>
            <person name="Prochnik S.E."/>
            <person name="Smith C.D."/>
            <person name="Tupy J.L."/>
            <person name="Whitfield E.J."/>
            <person name="Bayraktaroglu L."/>
            <person name="Berman B.P."/>
            <person name="Bettencourt B.R."/>
            <person name="Celniker S.E."/>
            <person name="de Grey A.D.N.J."/>
            <person name="Drysdale R.A."/>
            <person name="Harris N.L."/>
            <person name="Richter J."/>
            <person name="Russo S."/>
            <person name="Schroeder A.J."/>
            <person name="Shu S.Q."/>
            <person name="Stapleton M."/>
            <person name="Yamada C."/>
            <person name="Ashburner M."/>
            <person name="Gelbart W.M."/>
            <person name="Rubin G.M."/>
            <person name="Lewis S.E."/>
        </authorList>
    </citation>
    <scope>GENOME REANNOTATION</scope>
    <source>
        <strain>Berkeley</strain>
    </source>
</reference>
<reference key="3">
    <citation type="journal article" date="2002" name="Genome Biol.">
        <title>A Drosophila full-length cDNA resource.</title>
        <authorList>
            <person name="Stapleton M."/>
            <person name="Carlson J.W."/>
            <person name="Brokstein P."/>
            <person name="Yu C."/>
            <person name="Champe M."/>
            <person name="George R.A."/>
            <person name="Guarin H."/>
            <person name="Kronmiller B."/>
            <person name="Pacleb J.M."/>
            <person name="Park S."/>
            <person name="Wan K.H."/>
            <person name="Rubin G.M."/>
            <person name="Celniker S.E."/>
        </authorList>
    </citation>
    <scope>NUCLEOTIDE SEQUENCE [LARGE SCALE MRNA]</scope>
    <source>
        <strain>Berkeley</strain>
        <tissue>Head</tissue>
    </source>
</reference>
<reference key="4">
    <citation type="submission" date="2008-09" db="EMBL/GenBank/DDBJ databases">
        <authorList>
            <person name="Carlson J."/>
            <person name="Booth B."/>
            <person name="Frise E."/>
            <person name="Park S."/>
            <person name="Wan K."/>
            <person name="Yu C."/>
            <person name="Celniker S."/>
        </authorList>
    </citation>
    <scope>NUCLEOTIDE SEQUENCE [LARGE SCALE MRNA]</scope>
    <source>
        <strain>Berkeley</strain>
    </source>
</reference>
<reference key="5">
    <citation type="journal article" date="2000" name="J. Cell Biol.">
        <title>Drosophila melanogaster G protein-coupled receptors.</title>
        <authorList>
            <person name="Brody T."/>
            <person name="Cravchik A."/>
        </authorList>
    </citation>
    <scope>REVIEW</scope>
</reference>
<dbReference type="EMBL" id="AE014296">
    <property type="protein sequence ID" value="AAO41276.2"/>
    <property type="molecule type" value="Genomic_DNA"/>
</dbReference>
<dbReference type="EMBL" id="AY094944">
    <property type="protein sequence ID" value="AAM11297.1"/>
    <property type="molecule type" value="mRNA"/>
</dbReference>
<dbReference type="EMBL" id="BT044127">
    <property type="protein sequence ID" value="ACH92192.1"/>
    <property type="molecule type" value="mRNA"/>
</dbReference>
<dbReference type="RefSeq" id="NP_788462.2">
    <property type="nucleotide sequence ID" value="NM_176284.3"/>
</dbReference>
<dbReference type="SMR" id="Q9VRN2"/>
<dbReference type="FunCoup" id="Q9VRN2">
    <property type="interactions" value="55"/>
</dbReference>
<dbReference type="STRING" id="7227.FBpp0076796"/>
<dbReference type="GlyCosmos" id="Q9VRN2">
    <property type="glycosylation" value="4 sites, No reported glycans"/>
</dbReference>
<dbReference type="GlyGen" id="Q9VRN2">
    <property type="glycosylation" value="4 sites"/>
</dbReference>
<dbReference type="PaxDb" id="7227-FBpp0076796"/>
<dbReference type="DNASU" id="38636"/>
<dbReference type="EnsemblMetazoa" id="FBtr0077088">
    <property type="protein sequence ID" value="FBpp0076796"/>
    <property type="gene ID" value="FBgn0035623"/>
</dbReference>
<dbReference type="GeneID" id="38636"/>
<dbReference type="KEGG" id="dme:Dmel_CG17795"/>
<dbReference type="AGR" id="FB:FBgn0035623"/>
<dbReference type="CTD" id="38636"/>
<dbReference type="FlyBase" id="FBgn0035623">
    <property type="gene designation" value="mthl2"/>
</dbReference>
<dbReference type="VEuPathDB" id="VectorBase:FBgn0035623"/>
<dbReference type="eggNOG" id="KOG4193">
    <property type="taxonomic scope" value="Eukaryota"/>
</dbReference>
<dbReference type="GeneTree" id="ENSGT00940000168274"/>
<dbReference type="HOGENOM" id="CLU_002753_3_0_1"/>
<dbReference type="InParanoid" id="Q9VRN2"/>
<dbReference type="OMA" id="NAEIADC"/>
<dbReference type="OrthoDB" id="6134459at2759"/>
<dbReference type="PhylomeDB" id="Q9VRN2"/>
<dbReference type="BioGRID-ORCS" id="38636">
    <property type="hits" value="0 hits in 1 CRISPR screen"/>
</dbReference>
<dbReference type="GenomeRNAi" id="38636"/>
<dbReference type="PRO" id="PR:Q9VRN2"/>
<dbReference type="Proteomes" id="UP000000803">
    <property type="component" value="Chromosome 3L"/>
</dbReference>
<dbReference type="Bgee" id="FBgn0035623">
    <property type="expression patterns" value="Expressed in embryonic/larval hemocyte (Drosophila) and 22 other cell types or tissues"/>
</dbReference>
<dbReference type="GO" id="GO:0016020">
    <property type="term" value="C:membrane"/>
    <property type="evidence" value="ECO:0000250"/>
    <property type="project" value="FlyBase"/>
</dbReference>
<dbReference type="GO" id="GO:0005886">
    <property type="term" value="C:plasma membrane"/>
    <property type="evidence" value="ECO:0000318"/>
    <property type="project" value="GO_Central"/>
</dbReference>
<dbReference type="GO" id="GO:0008528">
    <property type="term" value="F:G protein-coupled peptide receptor activity"/>
    <property type="evidence" value="ECO:0000318"/>
    <property type="project" value="GO_Central"/>
</dbReference>
<dbReference type="GO" id="GO:0004930">
    <property type="term" value="F:G protein-coupled receptor activity"/>
    <property type="evidence" value="ECO:0000250"/>
    <property type="project" value="FlyBase"/>
</dbReference>
<dbReference type="GO" id="GO:0007166">
    <property type="term" value="P:cell surface receptor signaling pathway"/>
    <property type="evidence" value="ECO:0007669"/>
    <property type="project" value="InterPro"/>
</dbReference>
<dbReference type="GO" id="GO:0008340">
    <property type="term" value="P:determination of adult lifespan"/>
    <property type="evidence" value="ECO:0000250"/>
    <property type="project" value="UniProtKB"/>
</dbReference>
<dbReference type="GO" id="GO:0007186">
    <property type="term" value="P:G protein-coupled receptor signaling pathway"/>
    <property type="evidence" value="ECO:0000250"/>
    <property type="project" value="FlyBase"/>
</dbReference>
<dbReference type="GO" id="GO:0042594">
    <property type="term" value="P:response to starvation"/>
    <property type="evidence" value="ECO:0000250"/>
    <property type="project" value="UniProtKB"/>
</dbReference>
<dbReference type="CDD" id="cd15039">
    <property type="entry name" value="7tmB3_Methuselah-like"/>
    <property type="match status" value="1"/>
</dbReference>
<dbReference type="CDD" id="cd00251">
    <property type="entry name" value="Mth_Ecto"/>
    <property type="match status" value="1"/>
</dbReference>
<dbReference type="FunFam" id="1.20.1070.10:FF:000297">
    <property type="entry name" value="G-protein coupled receptor Mth"/>
    <property type="match status" value="1"/>
</dbReference>
<dbReference type="FunFam" id="2.170.180.11:FF:000001">
    <property type="entry name" value="G-protein coupled receptor Mth"/>
    <property type="match status" value="1"/>
</dbReference>
<dbReference type="FunFam" id="2.30.160.11:FF:000001">
    <property type="entry name" value="G-protein coupled receptor Mth"/>
    <property type="match status" value="1"/>
</dbReference>
<dbReference type="Gene3D" id="2.30.160.11">
    <property type="match status" value="1"/>
</dbReference>
<dbReference type="Gene3D" id="2.170.180.11">
    <property type="entry name" value="Methuselah ectodomain, domain 2"/>
    <property type="match status" value="1"/>
</dbReference>
<dbReference type="Gene3D" id="1.20.1070.10">
    <property type="entry name" value="Rhodopsin 7-helix transmembrane proteins"/>
    <property type="match status" value="1"/>
</dbReference>
<dbReference type="InterPro" id="IPR017981">
    <property type="entry name" value="GPCR_2-like_7TM"/>
</dbReference>
<dbReference type="InterPro" id="IPR000832">
    <property type="entry name" value="GPCR_2_secretin-like"/>
</dbReference>
<dbReference type="InterPro" id="IPR017452">
    <property type="entry name" value="GPCR_Rhodpsn_7TM"/>
</dbReference>
<dbReference type="InterPro" id="IPR044860">
    <property type="entry name" value="Methusela_ecto_dom_1"/>
</dbReference>
<dbReference type="InterPro" id="IPR023311">
    <property type="entry name" value="Methusela_ecto_dom_2"/>
</dbReference>
<dbReference type="InterPro" id="IPR010596">
    <property type="entry name" value="Methuselah_N_dom"/>
</dbReference>
<dbReference type="InterPro" id="IPR036272">
    <property type="entry name" value="Methuselah_N_sf"/>
</dbReference>
<dbReference type="InterPro" id="IPR051384">
    <property type="entry name" value="Mth_GPCR"/>
</dbReference>
<dbReference type="PANTHER" id="PTHR47154">
    <property type="entry name" value="G-PROTEIN COUPLED RECEPTOR MTH-RELATED"/>
    <property type="match status" value="1"/>
</dbReference>
<dbReference type="PANTHER" id="PTHR47154:SF2">
    <property type="entry name" value="G-PROTEIN COUPLED RECEPTOR MTH-RELATED"/>
    <property type="match status" value="1"/>
</dbReference>
<dbReference type="Pfam" id="PF00002">
    <property type="entry name" value="7tm_2"/>
    <property type="match status" value="1"/>
</dbReference>
<dbReference type="Pfam" id="PF06652">
    <property type="entry name" value="Methuselah_N"/>
    <property type="match status" value="1"/>
</dbReference>
<dbReference type="SUPFAM" id="SSF81321">
    <property type="entry name" value="Family A G protein-coupled receptor-like"/>
    <property type="match status" value="1"/>
</dbReference>
<dbReference type="SUPFAM" id="SSF63877">
    <property type="entry name" value="Methuselah ectodomain"/>
    <property type="match status" value="1"/>
</dbReference>
<dbReference type="PROSITE" id="PS50261">
    <property type="entry name" value="G_PROTEIN_RECEP_F2_4"/>
    <property type="match status" value="1"/>
</dbReference>
<evidence type="ECO:0000250" key="1">
    <source>
        <dbReference type="UniProtKB" id="O97148"/>
    </source>
</evidence>
<evidence type="ECO:0000255" key="2"/>
<evidence type="ECO:0000305" key="3"/>
<organism>
    <name type="scientific">Drosophila melanogaster</name>
    <name type="common">Fruit fly</name>
    <dbReference type="NCBI Taxonomy" id="7227"/>
    <lineage>
        <taxon>Eukaryota</taxon>
        <taxon>Metazoa</taxon>
        <taxon>Ecdysozoa</taxon>
        <taxon>Arthropoda</taxon>
        <taxon>Hexapoda</taxon>
        <taxon>Insecta</taxon>
        <taxon>Pterygota</taxon>
        <taxon>Neoptera</taxon>
        <taxon>Endopterygota</taxon>
        <taxon>Diptera</taxon>
        <taxon>Brachycera</taxon>
        <taxon>Muscomorpha</taxon>
        <taxon>Ephydroidea</taxon>
        <taxon>Drosophilidae</taxon>
        <taxon>Drosophila</taxon>
        <taxon>Sophophora</taxon>
    </lineage>
</organism>